<organism>
    <name type="scientific">Dictyostelium discoideum</name>
    <name type="common">Social amoeba</name>
    <dbReference type="NCBI Taxonomy" id="44689"/>
    <lineage>
        <taxon>Eukaryota</taxon>
        <taxon>Amoebozoa</taxon>
        <taxon>Evosea</taxon>
        <taxon>Eumycetozoa</taxon>
        <taxon>Dictyostelia</taxon>
        <taxon>Dictyosteliales</taxon>
        <taxon>Dictyosteliaceae</taxon>
        <taxon>Dictyostelium</taxon>
    </lineage>
</organism>
<protein>
    <recommendedName>
        <fullName>Putative uncharacterized protein DDB_G0283467</fullName>
    </recommendedName>
</protein>
<sequence>MTNEPSTSTPTSTSTSTSTSTSTSTTTLTSTSSTPTSTSTSTSTSTSTSTSTSTSLIYRGTIITITTFITII</sequence>
<dbReference type="EMBL" id="AAFI02000055">
    <property type="protein sequence ID" value="EAL65718.1"/>
    <property type="molecule type" value="Genomic_DNA"/>
</dbReference>
<dbReference type="RefSeq" id="XP_639093.1">
    <property type="nucleotide sequence ID" value="XM_634001.1"/>
</dbReference>
<dbReference type="SMR" id="Q54QZ8"/>
<dbReference type="EnsemblProtists" id="EAL65718">
    <property type="protein sequence ID" value="EAL65718"/>
    <property type="gene ID" value="DDB_G0283467"/>
</dbReference>
<dbReference type="GeneID" id="8624117"/>
<dbReference type="KEGG" id="ddi:DDB_G0283467"/>
<dbReference type="dictyBase" id="DDB_G0283467"/>
<dbReference type="HOGENOM" id="CLU_2727538_0_0_1"/>
<dbReference type="InParanoid" id="Q54QZ8"/>
<dbReference type="OMA" id="VTLMHQS"/>
<dbReference type="PRO" id="PR:Q54QZ8"/>
<dbReference type="Proteomes" id="UP000002195">
    <property type="component" value="Chromosome 4"/>
</dbReference>
<keyword id="KW-1185">Reference proteome</keyword>
<gene>
    <name type="ORF">DDB_G0283467</name>
</gene>
<proteinExistence type="predicted"/>
<accession>Q54QZ8</accession>
<reference key="1">
    <citation type="journal article" date="2005" name="Nature">
        <title>The genome of the social amoeba Dictyostelium discoideum.</title>
        <authorList>
            <person name="Eichinger L."/>
            <person name="Pachebat J.A."/>
            <person name="Gloeckner G."/>
            <person name="Rajandream M.A."/>
            <person name="Sucgang R."/>
            <person name="Berriman M."/>
            <person name="Song J."/>
            <person name="Olsen R."/>
            <person name="Szafranski K."/>
            <person name="Xu Q."/>
            <person name="Tunggal B."/>
            <person name="Kummerfeld S."/>
            <person name="Madera M."/>
            <person name="Konfortov B.A."/>
            <person name="Rivero F."/>
            <person name="Bankier A.T."/>
            <person name="Lehmann R."/>
            <person name="Hamlin N."/>
            <person name="Davies R."/>
            <person name="Gaudet P."/>
            <person name="Fey P."/>
            <person name="Pilcher K."/>
            <person name="Chen G."/>
            <person name="Saunders D."/>
            <person name="Sodergren E.J."/>
            <person name="Davis P."/>
            <person name="Kerhornou A."/>
            <person name="Nie X."/>
            <person name="Hall N."/>
            <person name="Anjard C."/>
            <person name="Hemphill L."/>
            <person name="Bason N."/>
            <person name="Farbrother P."/>
            <person name="Desany B."/>
            <person name="Just E."/>
            <person name="Morio T."/>
            <person name="Rost R."/>
            <person name="Churcher C.M."/>
            <person name="Cooper J."/>
            <person name="Haydock S."/>
            <person name="van Driessche N."/>
            <person name="Cronin A."/>
            <person name="Goodhead I."/>
            <person name="Muzny D.M."/>
            <person name="Mourier T."/>
            <person name="Pain A."/>
            <person name="Lu M."/>
            <person name="Harper D."/>
            <person name="Lindsay R."/>
            <person name="Hauser H."/>
            <person name="James K.D."/>
            <person name="Quiles M."/>
            <person name="Madan Babu M."/>
            <person name="Saito T."/>
            <person name="Buchrieser C."/>
            <person name="Wardroper A."/>
            <person name="Felder M."/>
            <person name="Thangavelu M."/>
            <person name="Johnson D."/>
            <person name="Knights A."/>
            <person name="Loulseged H."/>
            <person name="Mungall K.L."/>
            <person name="Oliver K."/>
            <person name="Price C."/>
            <person name="Quail M.A."/>
            <person name="Urushihara H."/>
            <person name="Hernandez J."/>
            <person name="Rabbinowitsch E."/>
            <person name="Steffen D."/>
            <person name="Sanders M."/>
            <person name="Ma J."/>
            <person name="Kohara Y."/>
            <person name="Sharp S."/>
            <person name="Simmonds M.N."/>
            <person name="Spiegler S."/>
            <person name="Tivey A."/>
            <person name="Sugano S."/>
            <person name="White B."/>
            <person name="Walker D."/>
            <person name="Woodward J.R."/>
            <person name="Winckler T."/>
            <person name="Tanaka Y."/>
            <person name="Shaulsky G."/>
            <person name="Schleicher M."/>
            <person name="Weinstock G.M."/>
            <person name="Rosenthal A."/>
            <person name="Cox E.C."/>
            <person name="Chisholm R.L."/>
            <person name="Gibbs R.A."/>
            <person name="Loomis W.F."/>
            <person name="Platzer M."/>
            <person name="Kay R.R."/>
            <person name="Williams J.G."/>
            <person name="Dear P.H."/>
            <person name="Noegel A.A."/>
            <person name="Barrell B.G."/>
            <person name="Kuspa A."/>
        </authorList>
    </citation>
    <scope>NUCLEOTIDE SEQUENCE [LARGE SCALE GENOMIC DNA]</scope>
    <source>
        <strain>AX4</strain>
    </source>
</reference>
<evidence type="ECO:0000256" key="1">
    <source>
        <dbReference type="SAM" id="MobiDB-lite"/>
    </source>
</evidence>
<feature type="chain" id="PRO_0000350881" description="Putative uncharacterized protein DDB_G0283467">
    <location>
        <begin position="1"/>
        <end position="72"/>
    </location>
</feature>
<feature type="region of interest" description="Disordered" evidence="1">
    <location>
        <begin position="1"/>
        <end position="53"/>
    </location>
</feature>
<name>Y5538_DICDI</name>